<gene>
    <name evidence="1" type="primary">rps20</name>
    <name type="ordered locus">Grc000135</name>
</gene>
<comment type="function">
    <text evidence="1">Binds directly to 16S ribosomal RNA.</text>
</comment>
<comment type="subcellular location">
    <subcellularLocation>
        <location>Plastid</location>
        <location>Chloroplast</location>
    </subcellularLocation>
</comment>
<comment type="similarity">
    <text evidence="1">Belongs to the bacterial ribosomal protein bS20 family.</text>
</comment>
<feature type="chain" id="PRO_0000168072" description="Small ribosomal subunit protein bS20c">
    <location>
        <begin position="1"/>
        <end position="97"/>
    </location>
</feature>
<feature type="region of interest" description="Disordered" evidence="2">
    <location>
        <begin position="1"/>
        <end position="20"/>
    </location>
</feature>
<feature type="compositionally biased region" description="Polar residues" evidence="2">
    <location>
        <begin position="1"/>
        <end position="15"/>
    </location>
</feature>
<reference key="1">
    <citation type="journal article" date="2004" name="J. Mol. Evol.">
        <title>Comparative analysis of the complete plastid genome sequence of the red alga Gracilaria tenuistipitata var. liui provides insights into the evolution of rhodoplasts and their relationship to other plastids.</title>
        <authorList>
            <person name="Hagopian J.C."/>
            <person name="Reis M."/>
            <person name="Kitajima J.P."/>
            <person name="Bhattacharya D."/>
            <person name="de Oliveira M.C."/>
        </authorList>
    </citation>
    <scope>NUCLEOTIDE SEQUENCE [LARGE SCALE GENOMIC DNA]</scope>
</reference>
<keyword id="KW-0150">Chloroplast</keyword>
<keyword id="KW-0934">Plastid</keyword>
<keyword id="KW-0687">Ribonucleoprotein</keyword>
<keyword id="KW-0689">Ribosomal protein</keyword>
<keyword id="KW-0694">RNA-binding</keyword>
<keyword id="KW-0699">rRNA-binding</keyword>
<dbReference type="EMBL" id="AY673996">
    <property type="protein sequence ID" value="AAT79716.1"/>
    <property type="molecule type" value="Genomic_DNA"/>
</dbReference>
<dbReference type="RefSeq" id="YP_063641.1">
    <property type="nucleotide sequence ID" value="NC_006137.1"/>
</dbReference>
<dbReference type="SMR" id="Q6B8R9"/>
<dbReference type="GeneID" id="2943948"/>
<dbReference type="GO" id="GO:0009507">
    <property type="term" value="C:chloroplast"/>
    <property type="evidence" value="ECO:0007669"/>
    <property type="project" value="UniProtKB-SubCell"/>
</dbReference>
<dbReference type="GO" id="GO:0005829">
    <property type="term" value="C:cytosol"/>
    <property type="evidence" value="ECO:0007669"/>
    <property type="project" value="TreeGrafter"/>
</dbReference>
<dbReference type="GO" id="GO:0015935">
    <property type="term" value="C:small ribosomal subunit"/>
    <property type="evidence" value="ECO:0007669"/>
    <property type="project" value="TreeGrafter"/>
</dbReference>
<dbReference type="GO" id="GO:0070181">
    <property type="term" value="F:small ribosomal subunit rRNA binding"/>
    <property type="evidence" value="ECO:0007669"/>
    <property type="project" value="TreeGrafter"/>
</dbReference>
<dbReference type="GO" id="GO:0003735">
    <property type="term" value="F:structural constituent of ribosome"/>
    <property type="evidence" value="ECO:0007669"/>
    <property type="project" value="InterPro"/>
</dbReference>
<dbReference type="GO" id="GO:0006412">
    <property type="term" value="P:translation"/>
    <property type="evidence" value="ECO:0007669"/>
    <property type="project" value="UniProtKB-UniRule"/>
</dbReference>
<dbReference type="Gene3D" id="1.20.58.110">
    <property type="entry name" value="Ribosomal protein S20"/>
    <property type="match status" value="1"/>
</dbReference>
<dbReference type="HAMAP" id="MF_00500">
    <property type="entry name" value="Ribosomal_bS20"/>
    <property type="match status" value="1"/>
</dbReference>
<dbReference type="InterPro" id="IPR002583">
    <property type="entry name" value="Ribosomal_bS20"/>
</dbReference>
<dbReference type="InterPro" id="IPR036510">
    <property type="entry name" value="Ribosomal_bS20_sf"/>
</dbReference>
<dbReference type="NCBIfam" id="TIGR00029">
    <property type="entry name" value="S20"/>
    <property type="match status" value="1"/>
</dbReference>
<dbReference type="PANTHER" id="PTHR33398">
    <property type="entry name" value="30S RIBOSOMAL PROTEIN S20"/>
    <property type="match status" value="1"/>
</dbReference>
<dbReference type="PANTHER" id="PTHR33398:SF1">
    <property type="entry name" value="SMALL RIBOSOMAL SUBUNIT PROTEIN BS20C"/>
    <property type="match status" value="1"/>
</dbReference>
<dbReference type="Pfam" id="PF01649">
    <property type="entry name" value="Ribosomal_S20p"/>
    <property type="match status" value="1"/>
</dbReference>
<dbReference type="SUPFAM" id="SSF46992">
    <property type="entry name" value="Ribosomal protein S20"/>
    <property type="match status" value="1"/>
</dbReference>
<accession>Q6B8R9</accession>
<organism>
    <name type="scientific">Gracilaria tenuistipitata var. liui</name>
    <name type="common">Red alga</name>
    <dbReference type="NCBI Taxonomy" id="285951"/>
    <lineage>
        <taxon>Eukaryota</taxon>
        <taxon>Rhodophyta</taxon>
        <taxon>Florideophyceae</taxon>
        <taxon>Rhodymeniophycidae</taxon>
        <taxon>Gracilariales</taxon>
        <taxon>Gracilariaceae</taxon>
        <taxon>Gracilaria</taxon>
        <taxon>Gracilaria tenuistipitata</taxon>
    </lineage>
</organism>
<name>RR20_GRATL</name>
<sequence>MSKNVSAIKKNQVSLRNKRKNKSYKSAIKTLIKKYINSLDELMDLNNTYVCTLKLSAVYKKIDQAVRKGVLHKNQGSRKKSMLAKAMKISISRIKTI</sequence>
<evidence type="ECO:0000255" key="1">
    <source>
        <dbReference type="HAMAP-Rule" id="MF_00500"/>
    </source>
</evidence>
<evidence type="ECO:0000256" key="2">
    <source>
        <dbReference type="SAM" id="MobiDB-lite"/>
    </source>
</evidence>
<evidence type="ECO:0000305" key="3"/>
<protein>
    <recommendedName>
        <fullName evidence="1">Small ribosomal subunit protein bS20c</fullName>
    </recommendedName>
    <alternativeName>
        <fullName evidence="3">30S ribosomal protein S20, chloroplastic</fullName>
    </alternativeName>
</protein>
<proteinExistence type="inferred from homology"/>
<geneLocation type="chloroplast"/>